<dbReference type="EMBL" id="CR857945">
    <property type="protein sequence ID" value="CAH90192.1"/>
    <property type="molecule type" value="mRNA"/>
</dbReference>
<dbReference type="RefSeq" id="NP_001125072.1">
    <property type="nucleotide sequence ID" value="NM_001131600.1"/>
</dbReference>
<dbReference type="FunCoup" id="Q5RDG5">
    <property type="interactions" value="148"/>
</dbReference>
<dbReference type="STRING" id="9601.ENSPPYP00000020477"/>
<dbReference type="Ensembl" id="ENSPPYT00000061006.1">
    <property type="protein sequence ID" value="ENSPPYP00000025243.1"/>
    <property type="gene ID" value="ENSPPYG00000018284.3"/>
</dbReference>
<dbReference type="GeneID" id="100171953"/>
<dbReference type="KEGG" id="pon:100171953"/>
<dbReference type="CTD" id="81552"/>
<dbReference type="eggNOG" id="ENOG502RYIF">
    <property type="taxonomic scope" value="Eukaryota"/>
</dbReference>
<dbReference type="GeneTree" id="ENSGT00390000015821"/>
<dbReference type="HOGENOM" id="CLU_1694909_0_0_1"/>
<dbReference type="InParanoid" id="Q5RDG5"/>
<dbReference type="OMA" id="FLECIEA"/>
<dbReference type="OrthoDB" id="6629737at2759"/>
<dbReference type="TreeFam" id="TF332098"/>
<dbReference type="Proteomes" id="UP000001595">
    <property type="component" value="Chromosome 7"/>
</dbReference>
<dbReference type="GO" id="GO:0030659">
    <property type="term" value="C:cytoplasmic vesicle membrane"/>
    <property type="evidence" value="ECO:0000250"/>
    <property type="project" value="UniProtKB"/>
</dbReference>
<dbReference type="GO" id="GO:0031902">
    <property type="term" value="C:late endosome membrane"/>
    <property type="evidence" value="ECO:0007669"/>
    <property type="project" value="UniProtKB-SubCell"/>
</dbReference>
<dbReference type="GO" id="GO:0005765">
    <property type="term" value="C:lysosomal membrane"/>
    <property type="evidence" value="ECO:0007669"/>
    <property type="project" value="UniProtKB-SubCell"/>
</dbReference>
<dbReference type="GO" id="GO:0031090">
    <property type="term" value="C:organelle membrane"/>
    <property type="evidence" value="ECO:0000250"/>
    <property type="project" value="UniProtKB"/>
</dbReference>
<dbReference type="GO" id="GO:0019899">
    <property type="term" value="F:enzyme binding"/>
    <property type="evidence" value="ECO:0007669"/>
    <property type="project" value="Ensembl"/>
</dbReference>
<dbReference type="InterPro" id="IPR026229">
    <property type="entry name" value="VOPP1"/>
</dbReference>
<dbReference type="PANTHER" id="PTHR14971">
    <property type="entry name" value="VESICULAR, OVEREXPRESSED IN CANCER, PROSURVIVAL PROTEIN 1"/>
    <property type="match status" value="1"/>
</dbReference>
<dbReference type="PANTHER" id="PTHR14971:SF2">
    <property type="entry name" value="VESICULAR, OVEREXPRESSED IN CANCER, PROSURVIVAL PROTEIN 1"/>
    <property type="match status" value="1"/>
</dbReference>
<dbReference type="PRINTS" id="PR02068">
    <property type="entry name" value="VOPPROTEIN1"/>
</dbReference>
<protein>
    <recommendedName>
        <fullName evidence="4">WW domain binding protein VOPP1</fullName>
    </recommendedName>
    <alternativeName>
        <fullName>EGFR-coamplified and overexpressed protein</fullName>
        <shortName>ECop</shortName>
    </alternativeName>
    <alternativeName>
        <fullName>Vesicular, overexpressed in cancer, prosurvival protein 1</fullName>
    </alternativeName>
</protein>
<organism>
    <name type="scientific">Pongo abelii</name>
    <name type="common">Sumatran orangutan</name>
    <name type="synonym">Pongo pygmaeus abelii</name>
    <dbReference type="NCBI Taxonomy" id="9601"/>
    <lineage>
        <taxon>Eukaryota</taxon>
        <taxon>Metazoa</taxon>
        <taxon>Chordata</taxon>
        <taxon>Craniata</taxon>
        <taxon>Vertebrata</taxon>
        <taxon>Euteleostomi</taxon>
        <taxon>Mammalia</taxon>
        <taxon>Eutheria</taxon>
        <taxon>Euarchontoglires</taxon>
        <taxon>Primates</taxon>
        <taxon>Haplorrhini</taxon>
        <taxon>Catarrhini</taxon>
        <taxon>Hominidae</taxon>
        <taxon>Pongo</taxon>
    </lineage>
</organism>
<feature type="signal peptide" evidence="2">
    <location>
        <begin position="1"/>
        <end position="22"/>
    </location>
</feature>
<feature type="chain" id="PRO_0000325919" description="WW domain binding protein VOPP1">
    <location>
        <begin position="23"/>
        <end position="172"/>
    </location>
</feature>
<feature type="topological domain" description="Extracellular" evidence="2">
    <location>
        <begin position="23"/>
        <end position="60"/>
    </location>
</feature>
<feature type="transmembrane region" description="Helical" evidence="2">
    <location>
        <begin position="61"/>
        <end position="81"/>
    </location>
</feature>
<feature type="topological domain" description="Cytoplasmic" evidence="2">
    <location>
        <begin position="82"/>
        <end position="172"/>
    </location>
</feature>
<feature type="region of interest" description="Disordered" evidence="3">
    <location>
        <begin position="102"/>
        <end position="153"/>
    </location>
</feature>
<feature type="compositionally biased region" description="Pro residues" evidence="3">
    <location>
        <begin position="104"/>
        <end position="119"/>
    </location>
</feature>
<comment type="function">
    <text evidence="1">Increases the transcriptional activity of NFKB1 by facilitating its nuclear translocation, DNA-binding and associated apoptotic response, when overexpressed. May sequester WWOX in lysosomal vesicles and thereby regulate WWOX role as tumor suppressor.</text>
</comment>
<comment type="subunit">
    <text evidence="1">Interacts with WWOX (via WW domain).</text>
</comment>
<comment type="subcellular location">
    <subcellularLocation>
        <location evidence="1">Cytoplasmic vesicle membrane</location>
        <topology evidence="1">Single-pass type I membrane protein</topology>
    </subcellularLocation>
    <subcellularLocation>
        <location evidence="1">Late endosome membrane</location>
        <topology evidence="1">Single-pass membrane protein</topology>
    </subcellularLocation>
    <subcellularLocation>
        <location evidence="1">Lysosome membrane</location>
        <topology evidence="1">Single-pass membrane protein</topology>
    </subcellularLocation>
    <text evidence="1">When overexpressed, localizes in the nucleus and perinuclear regions.</text>
</comment>
<comment type="similarity">
    <text evidence="4">Belongs to the VOPP1/ECOP family.</text>
</comment>
<accession>Q5RDG5</accession>
<gene>
    <name type="primary">VOPP1</name>
    <name type="synonym">ECOP</name>
</gene>
<evidence type="ECO:0000250" key="1">
    <source>
        <dbReference type="UniProtKB" id="Q96AW1"/>
    </source>
</evidence>
<evidence type="ECO:0000255" key="2"/>
<evidence type="ECO:0000256" key="3">
    <source>
        <dbReference type="SAM" id="MobiDB-lite"/>
    </source>
</evidence>
<evidence type="ECO:0000305" key="4"/>
<proteinExistence type="evidence at transcript level"/>
<keyword id="KW-0968">Cytoplasmic vesicle</keyword>
<keyword id="KW-0967">Endosome</keyword>
<keyword id="KW-0458">Lysosome</keyword>
<keyword id="KW-0472">Membrane</keyword>
<keyword id="KW-1185">Reference proteome</keyword>
<keyword id="KW-0732">Signal</keyword>
<keyword id="KW-0804">Transcription</keyword>
<keyword id="KW-0805">Transcription regulation</keyword>
<keyword id="KW-0812">Transmembrane</keyword>
<keyword id="KW-1133">Transmembrane helix</keyword>
<sequence>MRRQPAKVAALLLGLLLECTEAKKHCWYFEGLYPTYYICRSYEDCCGSRCCVRALSIQRLWYFWFLLMMGVLFCCGAGFFIRRRMYPPPLIEEPAFNVSYTRQPPNPGPGAQQPGPPYYTDPGGPGMNPVGNSMAMAFQLPPNSPQGSVACPPPPAYCNTPPPPYEQVVKAK</sequence>
<reference key="1">
    <citation type="submission" date="2004-11" db="EMBL/GenBank/DDBJ databases">
        <authorList>
            <consortium name="The German cDNA consortium"/>
        </authorList>
    </citation>
    <scope>NUCLEOTIDE SEQUENCE [LARGE SCALE MRNA]</scope>
    <source>
        <tissue>Kidney</tissue>
    </source>
</reference>
<name>VOPP1_PONAB</name>